<proteinExistence type="evidence at transcript level"/>
<organismHost>
    <name type="scientific">Escherichia coli</name>
    <dbReference type="NCBI Taxonomy" id="562"/>
</organismHost>
<sequence>MFRFREIEKTLCMDRTRDCAVRFHVYLQSLDLGSSDPLSPDFDGLAYLRDECLTKHPSLGDSNSDARRKELAYAKLMDSDQRCKIQNSNGYDYSHIESGVLSGILKTAQALVANLLTGFESHFLNDCSFSNGASQGFKLRDAAPFKKIAGQATVTAPAYDIAVAAVKTCAPWYAYMQETYGDETKWFRRVYGNGLFSVPKNNKIDRAACKEPDMNMYLQKGAGSFIRKRLRSVGIDLNDQTRNQELARLGSIDGSLATIDLSSASDSISDRLVWDLLPPHVYSYLARIRTSFTMIDGRLHKWGLFSTMGNGFTFELESMIFWALSKSIMLSMGVTGSLGIYGDDIIVPVECRPTLLKVLSAVNFLPNEEKTFTTGYFRESCGAHFFKDADMKPFYCKRPMETLPDVMLLCNRIRGWQTVGGMSDPRLFPIWKEFADMIPPKFKGGCNLDRDTYLVSPDKPGVSLVRIAKVRSGFNHAFPYGHENGRYVHWLHMGSGEVLETISSARYRCKPNSEWRTQIPLFPQELEACVLS</sequence>
<keyword id="KW-0547">Nucleotide-binding</keyword>
<keyword id="KW-0548">Nucleotidyltransferase</keyword>
<keyword id="KW-1185">Reference proteome</keyword>
<keyword id="KW-0696">RNA-directed RNA polymerase</keyword>
<keyword id="KW-0808">Transferase</keyword>
<keyword id="KW-0693">Viral RNA replication</keyword>
<organism>
    <name type="scientific">Enterobacteria phage GA</name>
    <name type="common">Bacteriophage GA</name>
    <dbReference type="NCBI Taxonomy" id="12018"/>
    <lineage>
        <taxon>Viruses</taxon>
        <taxon>Riboviria</taxon>
        <taxon>Orthornavirae</taxon>
        <taxon>Lenarviricota</taxon>
        <taxon>Leviviricetes</taxon>
        <taxon>Norzivirales</taxon>
        <taxon>Fiersviridae</taxon>
        <taxon>Emesvirus</taxon>
        <taxon>Escherichia phage BZ13</taxon>
    </lineage>
</organism>
<comment type="function">
    <text evidence="1">This is the catalytic subunit of the viral RNA-dependent RNA polymerase complex. This complex is involved in viral RNA replication that produces (+)-stranded genomes via a complementary, (-)-stranded intermediate.</text>
</comment>
<comment type="catalytic activity">
    <reaction evidence="1 2">
        <text>RNA(n) + a ribonucleoside 5'-triphosphate = RNA(n+1) + diphosphate</text>
        <dbReference type="Rhea" id="RHEA:21248"/>
        <dbReference type="Rhea" id="RHEA-COMP:14527"/>
        <dbReference type="Rhea" id="RHEA-COMP:17342"/>
        <dbReference type="ChEBI" id="CHEBI:33019"/>
        <dbReference type="ChEBI" id="CHEBI:61557"/>
        <dbReference type="ChEBI" id="CHEBI:140395"/>
        <dbReference type="EC" id="2.7.7.48"/>
    </reaction>
</comment>
<comment type="subunit">
    <text evidence="1">Part of the viral RNA-dependent RNA polymerase complex, the other subunits are probably the host ribosomal protein S1, EF-Tu and EF-Ts.</text>
</comment>
<dbReference type="EC" id="2.7.7.48" evidence="1"/>
<dbReference type="EMBL" id="X03869">
    <property type="protein sequence ID" value="CAA27499.1"/>
    <property type="molecule type" value="mRNA"/>
</dbReference>
<dbReference type="PIR" id="JS0008">
    <property type="entry name" value="RRBPBG"/>
</dbReference>
<dbReference type="RefSeq" id="YP_010377187.1">
    <property type="nucleotide sequence ID" value="NC_001426.1"/>
</dbReference>
<dbReference type="SMR" id="P07393"/>
<dbReference type="GeneID" id="1261004"/>
<dbReference type="Proteomes" id="UP000002126">
    <property type="component" value="Genome"/>
</dbReference>
<dbReference type="GO" id="GO:0000166">
    <property type="term" value="F:nucleotide binding"/>
    <property type="evidence" value="ECO:0007669"/>
    <property type="project" value="UniProtKB-KW"/>
</dbReference>
<dbReference type="GO" id="GO:0003968">
    <property type="term" value="F:RNA-directed RNA polymerase activity"/>
    <property type="evidence" value="ECO:0007669"/>
    <property type="project" value="UniProtKB-KW"/>
</dbReference>
<dbReference type="GO" id="GO:0039694">
    <property type="term" value="P:viral RNA genome replication"/>
    <property type="evidence" value="ECO:0007669"/>
    <property type="project" value="InterPro"/>
</dbReference>
<dbReference type="InterPro" id="IPR043502">
    <property type="entry name" value="DNA/RNA_pol_sf"/>
</dbReference>
<dbReference type="InterPro" id="IPR007096">
    <property type="entry name" value="RNA-dir_Rpol_cat_phage"/>
</dbReference>
<dbReference type="InterPro" id="IPR005093">
    <property type="entry name" value="RNArep_beta"/>
</dbReference>
<dbReference type="Pfam" id="PF03431">
    <property type="entry name" value="RNA_replicase_B"/>
    <property type="match status" value="1"/>
</dbReference>
<dbReference type="SUPFAM" id="SSF56672">
    <property type="entry name" value="DNA/RNA polymerases"/>
    <property type="match status" value="1"/>
</dbReference>
<dbReference type="PROSITE" id="PS50522">
    <property type="entry name" value="RDRP_PHAGE"/>
    <property type="match status" value="1"/>
</dbReference>
<evidence type="ECO:0000250" key="1">
    <source>
        <dbReference type="UniProtKB" id="P00585"/>
    </source>
</evidence>
<evidence type="ECO:0000255" key="2">
    <source>
        <dbReference type="PROSITE-ProRule" id="PRU00539"/>
    </source>
</evidence>
<protein>
    <recommendedName>
        <fullName>RNA-directed RNA polymerase beta chain</fullName>
        <ecNumber evidence="1">2.7.7.48</ecNumber>
    </recommendedName>
    <alternativeName>
        <fullName>RNA replicase beta chain</fullName>
    </alternativeName>
</protein>
<accession>P07393</accession>
<reference key="1">
    <citation type="journal article" date="1986" name="J. Biochem.">
        <title>The complete nucleotide sequence of the group II RNA coliphage GA.</title>
        <authorList>
            <person name="Inokuchi Y."/>
            <person name="Takahashi R."/>
            <person name="Hirose T."/>
            <person name="Inayama S."/>
            <person name="Jacobson A.B."/>
            <person name="Hirashima A."/>
        </authorList>
    </citation>
    <scope>NUCLEOTIDE SEQUENCE [MRNA]</scope>
</reference>
<name>RDRP_BPGA</name>
<feature type="chain" id="PRO_0000164852" description="RNA-directed RNA polymerase beta chain">
    <location>
        <begin position="1"/>
        <end position="532"/>
    </location>
</feature>
<feature type="domain" description="RdRp catalytic" evidence="2">
    <location>
        <begin position="245"/>
        <end position="375"/>
    </location>
</feature>